<dbReference type="EMBL" id="CP001472">
    <property type="protein sequence ID" value="ACO31724.1"/>
    <property type="molecule type" value="Genomic_DNA"/>
</dbReference>
<dbReference type="RefSeq" id="WP_015897188.1">
    <property type="nucleotide sequence ID" value="NC_012483.1"/>
</dbReference>
<dbReference type="SMR" id="C1F924"/>
<dbReference type="FunCoup" id="C1F924">
    <property type="interactions" value="495"/>
</dbReference>
<dbReference type="STRING" id="240015.ACP_2087"/>
<dbReference type="KEGG" id="aca:ACP_2087"/>
<dbReference type="eggNOG" id="COG0576">
    <property type="taxonomic scope" value="Bacteria"/>
</dbReference>
<dbReference type="HOGENOM" id="CLU_057217_5_0_0"/>
<dbReference type="InParanoid" id="C1F924"/>
<dbReference type="OrthoDB" id="9812586at2"/>
<dbReference type="Proteomes" id="UP000002207">
    <property type="component" value="Chromosome"/>
</dbReference>
<dbReference type="GO" id="GO:0005737">
    <property type="term" value="C:cytoplasm"/>
    <property type="evidence" value="ECO:0007669"/>
    <property type="project" value="UniProtKB-SubCell"/>
</dbReference>
<dbReference type="GO" id="GO:0000774">
    <property type="term" value="F:adenyl-nucleotide exchange factor activity"/>
    <property type="evidence" value="ECO:0007669"/>
    <property type="project" value="InterPro"/>
</dbReference>
<dbReference type="GO" id="GO:0042803">
    <property type="term" value="F:protein homodimerization activity"/>
    <property type="evidence" value="ECO:0007669"/>
    <property type="project" value="InterPro"/>
</dbReference>
<dbReference type="GO" id="GO:0051087">
    <property type="term" value="F:protein-folding chaperone binding"/>
    <property type="evidence" value="ECO:0007669"/>
    <property type="project" value="InterPro"/>
</dbReference>
<dbReference type="GO" id="GO:0051082">
    <property type="term" value="F:unfolded protein binding"/>
    <property type="evidence" value="ECO:0007669"/>
    <property type="project" value="TreeGrafter"/>
</dbReference>
<dbReference type="GO" id="GO:0006457">
    <property type="term" value="P:protein folding"/>
    <property type="evidence" value="ECO:0007669"/>
    <property type="project" value="InterPro"/>
</dbReference>
<dbReference type="CDD" id="cd00446">
    <property type="entry name" value="GrpE"/>
    <property type="match status" value="1"/>
</dbReference>
<dbReference type="FunFam" id="2.30.22.10:FF:000001">
    <property type="entry name" value="Protein GrpE"/>
    <property type="match status" value="1"/>
</dbReference>
<dbReference type="Gene3D" id="3.90.20.20">
    <property type="match status" value="1"/>
</dbReference>
<dbReference type="Gene3D" id="2.30.22.10">
    <property type="entry name" value="Head domain of nucleotide exchange factor GrpE"/>
    <property type="match status" value="1"/>
</dbReference>
<dbReference type="HAMAP" id="MF_01151">
    <property type="entry name" value="GrpE"/>
    <property type="match status" value="1"/>
</dbReference>
<dbReference type="InterPro" id="IPR000740">
    <property type="entry name" value="GrpE"/>
</dbReference>
<dbReference type="InterPro" id="IPR013805">
    <property type="entry name" value="GrpE_coiled_coil"/>
</dbReference>
<dbReference type="InterPro" id="IPR009012">
    <property type="entry name" value="GrpE_head"/>
</dbReference>
<dbReference type="PANTHER" id="PTHR21237">
    <property type="entry name" value="GRPE PROTEIN"/>
    <property type="match status" value="1"/>
</dbReference>
<dbReference type="PANTHER" id="PTHR21237:SF23">
    <property type="entry name" value="GRPE PROTEIN HOMOLOG, MITOCHONDRIAL"/>
    <property type="match status" value="1"/>
</dbReference>
<dbReference type="Pfam" id="PF01025">
    <property type="entry name" value="GrpE"/>
    <property type="match status" value="1"/>
</dbReference>
<dbReference type="PRINTS" id="PR00773">
    <property type="entry name" value="GRPEPROTEIN"/>
</dbReference>
<dbReference type="SUPFAM" id="SSF58014">
    <property type="entry name" value="Coiled-coil domain of nucleotide exchange factor GrpE"/>
    <property type="match status" value="1"/>
</dbReference>
<dbReference type="SUPFAM" id="SSF51064">
    <property type="entry name" value="Head domain of nucleotide exchange factor GrpE"/>
    <property type="match status" value="1"/>
</dbReference>
<reference key="1">
    <citation type="journal article" date="2009" name="Appl. Environ. Microbiol.">
        <title>Three genomes from the phylum Acidobacteria provide insight into the lifestyles of these microorganisms in soils.</title>
        <authorList>
            <person name="Ward N.L."/>
            <person name="Challacombe J.F."/>
            <person name="Janssen P.H."/>
            <person name="Henrissat B."/>
            <person name="Coutinho P.M."/>
            <person name="Wu M."/>
            <person name="Xie G."/>
            <person name="Haft D.H."/>
            <person name="Sait M."/>
            <person name="Badger J."/>
            <person name="Barabote R.D."/>
            <person name="Bradley B."/>
            <person name="Brettin T.S."/>
            <person name="Brinkac L.M."/>
            <person name="Bruce D."/>
            <person name="Creasy T."/>
            <person name="Daugherty S.C."/>
            <person name="Davidsen T.M."/>
            <person name="DeBoy R.T."/>
            <person name="Detter J.C."/>
            <person name="Dodson R.J."/>
            <person name="Durkin A.S."/>
            <person name="Ganapathy A."/>
            <person name="Gwinn-Giglio M."/>
            <person name="Han C.S."/>
            <person name="Khouri H."/>
            <person name="Kiss H."/>
            <person name="Kothari S.P."/>
            <person name="Madupu R."/>
            <person name="Nelson K.E."/>
            <person name="Nelson W.C."/>
            <person name="Paulsen I."/>
            <person name="Penn K."/>
            <person name="Ren Q."/>
            <person name="Rosovitz M.J."/>
            <person name="Selengut J.D."/>
            <person name="Shrivastava S."/>
            <person name="Sullivan S.A."/>
            <person name="Tapia R."/>
            <person name="Thompson L.S."/>
            <person name="Watkins K.L."/>
            <person name="Yang Q."/>
            <person name="Yu C."/>
            <person name="Zafar N."/>
            <person name="Zhou L."/>
            <person name="Kuske C.R."/>
        </authorList>
    </citation>
    <scope>NUCLEOTIDE SEQUENCE [LARGE SCALE GENOMIC DNA]</scope>
    <source>
        <strain>ATCC 51196 / DSM 11244 / BCRC 80197 / JCM 7670 / NBRC 15755 / NCIMB 13165 / 161</strain>
    </source>
</reference>
<keyword id="KW-0143">Chaperone</keyword>
<keyword id="KW-0963">Cytoplasm</keyword>
<keyword id="KW-1185">Reference proteome</keyword>
<keyword id="KW-0346">Stress response</keyword>
<protein>
    <recommendedName>
        <fullName evidence="1">Protein GrpE</fullName>
    </recommendedName>
    <alternativeName>
        <fullName evidence="1">HSP-70 cofactor</fullName>
    </alternativeName>
</protein>
<gene>
    <name evidence="1" type="primary">grpE</name>
    <name type="ordered locus">ACP_2087</name>
</gene>
<sequence>MSRKLHEEELTPEGMDAAQNADPAGDPVSENEGALPAAEPQAQILQEEVERLRAERDAALADREAFQDRLARLQAEFDNARKREAKERSEFRDYSVASTAEAFLPVLDNFQLALASTGTAEQLRMGVELIVKQMDEALRSLSIIPIETVGAQFDPRVHEALEMVEREDVPDHQVIEEVRRGYRIRERLMRPALVRIASNSKQTQA</sequence>
<comment type="function">
    <text evidence="1">Participates actively in the response to hyperosmotic and heat shock by preventing the aggregation of stress-denatured proteins, in association with DnaK and GrpE. It is the nucleotide exchange factor for DnaK and may function as a thermosensor. Unfolded proteins bind initially to DnaJ; upon interaction with the DnaJ-bound protein, DnaK hydrolyzes its bound ATP, resulting in the formation of a stable complex. GrpE releases ADP from DnaK; ATP binding to DnaK triggers the release of the substrate protein, thus completing the reaction cycle. Several rounds of ATP-dependent interactions between DnaJ, DnaK and GrpE are required for fully efficient folding.</text>
</comment>
<comment type="subunit">
    <text evidence="1">Homodimer.</text>
</comment>
<comment type="subcellular location">
    <subcellularLocation>
        <location evidence="1">Cytoplasm</location>
    </subcellularLocation>
</comment>
<comment type="similarity">
    <text evidence="1">Belongs to the GrpE family.</text>
</comment>
<organism>
    <name type="scientific">Acidobacterium capsulatum (strain ATCC 51196 / DSM 11244 / BCRC 80197 / JCM 7670 / NBRC 15755 / NCIMB 13165 / 161)</name>
    <dbReference type="NCBI Taxonomy" id="240015"/>
    <lineage>
        <taxon>Bacteria</taxon>
        <taxon>Pseudomonadati</taxon>
        <taxon>Acidobacteriota</taxon>
        <taxon>Terriglobia</taxon>
        <taxon>Terriglobales</taxon>
        <taxon>Acidobacteriaceae</taxon>
        <taxon>Acidobacterium</taxon>
    </lineage>
</organism>
<proteinExistence type="inferred from homology"/>
<evidence type="ECO:0000255" key="1">
    <source>
        <dbReference type="HAMAP-Rule" id="MF_01151"/>
    </source>
</evidence>
<evidence type="ECO:0000256" key="2">
    <source>
        <dbReference type="SAM" id="MobiDB-lite"/>
    </source>
</evidence>
<name>GRPE_ACIC5</name>
<feature type="chain" id="PRO_1000164174" description="Protein GrpE">
    <location>
        <begin position="1"/>
        <end position="205"/>
    </location>
</feature>
<feature type="region of interest" description="Disordered" evidence="2">
    <location>
        <begin position="1"/>
        <end position="40"/>
    </location>
</feature>
<accession>C1F924</accession>